<organism>
    <name type="scientific">Bacillus licheniformis (strain ATCC 14580 / DSM 13 / JCM 2505 / CCUG 7422 / NBRC 12200 / NCIMB 9375 / NCTC 10341 / NRRL NRS-1264 / Gibson 46)</name>
    <dbReference type="NCBI Taxonomy" id="279010"/>
    <lineage>
        <taxon>Bacteria</taxon>
        <taxon>Bacillati</taxon>
        <taxon>Bacillota</taxon>
        <taxon>Bacilli</taxon>
        <taxon>Bacillales</taxon>
        <taxon>Bacillaceae</taxon>
        <taxon>Bacillus</taxon>
    </lineage>
</organism>
<evidence type="ECO:0000255" key="1">
    <source>
        <dbReference type="HAMAP-Rule" id="MF_01371"/>
    </source>
</evidence>
<evidence type="ECO:0000305" key="2"/>
<proteinExistence type="inferred from homology"/>
<comment type="subunit">
    <text evidence="1">Part of the 50S ribosomal subunit.</text>
</comment>
<comment type="similarity">
    <text evidence="1">Belongs to the universal ribosomal protein uL30 family.</text>
</comment>
<keyword id="KW-1185">Reference proteome</keyword>
<keyword id="KW-0687">Ribonucleoprotein</keyword>
<keyword id="KW-0689">Ribosomal protein</keyword>
<reference key="1">
    <citation type="journal article" date="2004" name="J. Mol. Microbiol. Biotechnol.">
        <title>The complete genome sequence of Bacillus licheniformis DSM13, an organism with great industrial potential.</title>
        <authorList>
            <person name="Veith B."/>
            <person name="Herzberg C."/>
            <person name="Steckel S."/>
            <person name="Feesche J."/>
            <person name="Maurer K.H."/>
            <person name="Ehrenreich P."/>
            <person name="Baeumer S."/>
            <person name="Henne A."/>
            <person name="Liesegang H."/>
            <person name="Merkl R."/>
            <person name="Ehrenreich A."/>
            <person name="Gottschalk G."/>
        </authorList>
    </citation>
    <scope>NUCLEOTIDE SEQUENCE [LARGE SCALE GENOMIC DNA]</scope>
    <source>
        <strain>ATCC 14580 / DSM 13 / JCM 2505 / CCUG 7422 / NBRC 12200 / NCIMB 9375 / NCTC 10341 / NRRL NRS-1264 / Gibson 46</strain>
    </source>
</reference>
<reference key="2">
    <citation type="journal article" date="2004" name="Genome Biol.">
        <title>Complete genome sequence of the industrial bacterium Bacillus licheniformis and comparisons with closely related Bacillus species.</title>
        <authorList>
            <person name="Rey M.W."/>
            <person name="Ramaiya P."/>
            <person name="Nelson B.A."/>
            <person name="Brody-Karpin S.D."/>
            <person name="Zaretsky E.J."/>
            <person name="Tang M."/>
            <person name="Lopez de Leon A."/>
            <person name="Xiang H."/>
            <person name="Gusti V."/>
            <person name="Clausen I.G."/>
            <person name="Olsen P.B."/>
            <person name="Rasmussen M.D."/>
            <person name="Andersen J.T."/>
            <person name="Joergensen P.L."/>
            <person name="Larsen T.S."/>
            <person name="Sorokin A."/>
            <person name="Bolotin A."/>
            <person name="Lapidus A."/>
            <person name="Galleron N."/>
            <person name="Ehrlich S.D."/>
            <person name="Berka R.M."/>
        </authorList>
    </citation>
    <scope>NUCLEOTIDE SEQUENCE [LARGE SCALE GENOMIC DNA]</scope>
    <source>
        <strain>ATCC 14580 / DSM 13 / JCM 2505 / CCUG 7422 / NBRC 12200 / NCIMB 9375 / NCTC 10341 / NRRL NRS-1264 / Gibson 46</strain>
    </source>
</reference>
<accession>Q65P89</accession>
<accession>Q62ZM8</accession>
<gene>
    <name evidence="1" type="primary">rpmD</name>
    <name type="ordered locus">BLi00151</name>
    <name type="ordered locus">BL01033</name>
</gene>
<dbReference type="EMBL" id="CP000002">
    <property type="protein sequence ID" value="AAU21780.1"/>
    <property type="molecule type" value="Genomic_DNA"/>
</dbReference>
<dbReference type="EMBL" id="AE017333">
    <property type="protein sequence ID" value="AAU39125.1"/>
    <property type="molecule type" value="Genomic_DNA"/>
</dbReference>
<dbReference type="RefSeq" id="WP_003178363.1">
    <property type="nucleotide sequence ID" value="NC_006322.1"/>
</dbReference>
<dbReference type="SMR" id="Q65P89"/>
<dbReference type="STRING" id="279010.BL01033"/>
<dbReference type="GeneID" id="92858885"/>
<dbReference type="KEGG" id="bld:BLi00151"/>
<dbReference type="KEGG" id="bli:BL01033"/>
<dbReference type="eggNOG" id="COG1841">
    <property type="taxonomic scope" value="Bacteria"/>
</dbReference>
<dbReference type="HOGENOM" id="CLU_131047_2_1_9"/>
<dbReference type="Proteomes" id="UP000000606">
    <property type="component" value="Chromosome"/>
</dbReference>
<dbReference type="GO" id="GO:0022625">
    <property type="term" value="C:cytosolic large ribosomal subunit"/>
    <property type="evidence" value="ECO:0007669"/>
    <property type="project" value="TreeGrafter"/>
</dbReference>
<dbReference type="GO" id="GO:0003735">
    <property type="term" value="F:structural constituent of ribosome"/>
    <property type="evidence" value="ECO:0007669"/>
    <property type="project" value="InterPro"/>
</dbReference>
<dbReference type="GO" id="GO:0006412">
    <property type="term" value="P:translation"/>
    <property type="evidence" value="ECO:0007669"/>
    <property type="project" value="UniProtKB-UniRule"/>
</dbReference>
<dbReference type="CDD" id="cd01658">
    <property type="entry name" value="Ribosomal_L30"/>
    <property type="match status" value="1"/>
</dbReference>
<dbReference type="FunFam" id="3.30.1390.20:FF:000001">
    <property type="entry name" value="50S ribosomal protein L30"/>
    <property type="match status" value="1"/>
</dbReference>
<dbReference type="Gene3D" id="3.30.1390.20">
    <property type="entry name" value="Ribosomal protein L30, ferredoxin-like fold domain"/>
    <property type="match status" value="1"/>
</dbReference>
<dbReference type="HAMAP" id="MF_01371_B">
    <property type="entry name" value="Ribosomal_uL30_B"/>
    <property type="match status" value="1"/>
</dbReference>
<dbReference type="InterPro" id="IPR036919">
    <property type="entry name" value="Ribo_uL30_ferredoxin-like_sf"/>
</dbReference>
<dbReference type="InterPro" id="IPR005996">
    <property type="entry name" value="Ribosomal_uL30_bac-type"/>
</dbReference>
<dbReference type="InterPro" id="IPR018038">
    <property type="entry name" value="Ribosomal_uL30_CS"/>
</dbReference>
<dbReference type="InterPro" id="IPR016082">
    <property type="entry name" value="Ribosomal_uL30_ferredoxin-like"/>
</dbReference>
<dbReference type="NCBIfam" id="TIGR01308">
    <property type="entry name" value="rpmD_bact"/>
    <property type="match status" value="1"/>
</dbReference>
<dbReference type="PANTHER" id="PTHR15892:SF2">
    <property type="entry name" value="LARGE RIBOSOMAL SUBUNIT PROTEIN UL30M"/>
    <property type="match status" value="1"/>
</dbReference>
<dbReference type="PANTHER" id="PTHR15892">
    <property type="entry name" value="MITOCHONDRIAL RIBOSOMAL PROTEIN L30"/>
    <property type="match status" value="1"/>
</dbReference>
<dbReference type="Pfam" id="PF00327">
    <property type="entry name" value="Ribosomal_L30"/>
    <property type="match status" value="1"/>
</dbReference>
<dbReference type="PIRSF" id="PIRSF002211">
    <property type="entry name" value="Ribosomal_L30_bac-type"/>
    <property type="match status" value="1"/>
</dbReference>
<dbReference type="SUPFAM" id="SSF55129">
    <property type="entry name" value="Ribosomal protein L30p/L7e"/>
    <property type="match status" value="1"/>
</dbReference>
<dbReference type="PROSITE" id="PS00634">
    <property type="entry name" value="RIBOSOMAL_L30"/>
    <property type="match status" value="1"/>
</dbReference>
<protein>
    <recommendedName>
        <fullName evidence="1">Large ribosomal subunit protein uL30</fullName>
    </recommendedName>
    <alternativeName>
        <fullName evidence="2">50S ribosomal protein L30</fullName>
    </alternativeName>
</protein>
<name>RL30_BACLD</name>
<sequence length="59" mass="6637">MAKLEITLKRSVIGRPEDQRITVRTLGLKKTNQTVVHEDNAAIRGMINKVSHLVSVKEL</sequence>
<feature type="chain" id="PRO_1000056008" description="Large ribosomal subunit protein uL30">
    <location>
        <begin position="1"/>
        <end position="59"/>
    </location>
</feature>